<feature type="chain" id="PRO_0000442643" description="Protein YtiD">
    <location>
        <begin position="1"/>
        <end position="47"/>
    </location>
</feature>
<dbReference type="EMBL" id="U00096">
    <property type="protein sequence ID" value="AYC08259.1"/>
    <property type="molecule type" value="Genomic_DNA"/>
</dbReference>
<dbReference type="EnsemblBacteria" id="AYC08259">
    <property type="protein sequence ID" value="AYC08259"/>
    <property type="gene ID" value="b4721"/>
</dbReference>
<dbReference type="InParanoid" id="P0DPC5"/>
<dbReference type="BioCyc" id="EcoCyc:MONOMER0-4392"/>
<dbReference type="PRO" id="PR:P0DPC5"/>
<dbReference type="Proteomes" id="UP000000625">
    <property type="component" value="Chromosome"/>
</dbReference>
<sequence>MADYAEINNFPPELSSSGDKYFHLRNYSEYSEYTSGFFLSLMIFIKS</sequence>
<protein>
    <recommendedName>
        <fullName>Protein YtiD</fullName>
    </recommendedName>
</protein>
<keyword id="KW-1185">Reference proteome</keyword>
<comment type="induction">
    <text evidence="1">Expressed at low levels during late logarithmic and stationary growth (at protein level) (PubMed:28851853).</text>
</comment>
<comment type="disruption phenotype">
    <text evidence="1">No effect on iraD expression (PubMed:28851853).</text>
</comment>
<organism>
    <name type="scientific">Escherichia coli (strain K12)</name>
    <dbReference type="NCBI Taxonomy" id="83333"/>
    <lineage>
        <taxon>Bacteria</taxon>
        <taxon>Pseudomonadati</taxon>
        <taxon>Pseudomonadota</taxon>
        <taxon>Gammaproteobacteria</taxon>
        <taxon>Enterobacterales</taxon>
        <taxon>Enterobacteriaceae</taxon>
        <taxon>Escherichia</taxon>
    </lineage>
</organism>
<accession>P0DPC5</accession>
<accession>A0A385XJP8</accession>
<proteinExistence type="evidence at protein level"/>
<gene>
    <name type="primary">ytiD</name>
    <name type="ordered locus">b4721</name>
</gene>
<name>YTID_ECOLI</name>
<reference key="1">
    <citation type="journal article" date="1997" name="Science">
        <title>The complete genome sequence of Escherichia coli K-12.</title>
        <authorList>
            <person name="Blattner F.R."/>
            <person name="Plunkett G. III"/>
            <person name="Bloch C.A."/>
            <person name="Perna N.T."/>
            <person name="Burland V."/>
            <person name="Riley M."/>
            <person name="Collado-Vides J."/>
            <person name="Glasner J.D."/>
            <person name="Rode C.K."/>
            <person name="Mayhew G.F."/>
            <person name="Gregor J."/>
            <person name="Davis N.W."/>
            <person name="Kirkpatrick H.A."/>
            <person name="Goeden M.A."/>
            <person name="Rose D.J."/>
            <person name="Mau B."/>
            <person name="Shao Y."/>
        </authorList>
    </citation>
    <scope>NUCLEOTIDE SEQUENCE [LARGE SCALE GENOMIC DNA]</scope>
    <source>
        <strain>K12 / MG1655 / ATCC 47076</strain>
    </source>
</reference>
<reference key="2">
    <citation type="journal article" date="2017" name="MBio">
        <title>Translational repression of the RpoS antiadapter IraD by CsrA is mediated via translational coupling to a short upstream open reading frame.</title>
        <authorList>
            <person name="Park H."/>
            <person name="McGibbon L.C."/>
            <person name="Potts A.H."/>
            <person name="Yakhnin H."/>
            <person name="Romeo T."/>
            <person name="Babitzke P."/>
        </authorList>
    </citation>
    <scope>IDENTIFICATION</scope>
    <scope>INDUCTION</scope>
    <scope>DISRUPTION PHENOTYPE</scope>
    <source>
        <strain>K12 / CF7789</strain>
    </source>
</reference>
<evidence type="ECO:0000269" key="1">
    <source>
    </source>
</evidence>